<organism>
    <name type="scientific">Cellvibrio japonicus (strain Ueda107)</name>
    <name type="common">Pseudomonas fluorescens subsp. cellulosa</name>
    <dbReference type="NCBI Taxonomy" id="498211"/>
    <lineage>
        <taxon>Bacteria</taxon>
        <taxon>Pseudomonadati</taxon>
        <taxon>Pseudomonadota</taxon>
        <taxon>Gammaproteobacteria</taxon>
        <taxon>Cellvibrionales</taxon>
        <taxon>Cellvibrionaceae</taxon>
        <taxon>Cellvibrio</taxon>
    </lineage>
</organism>
<name>SECB_CELJU</name>
<reference key="1">
    <citation type="journal article" date="2008" name="J. Bacteriol.">
        <title>Insights into plant cell wall degradation from the genome sequence of the soil bacterium Cellvibrio japonicus.</title>
        <authorList>
            <person name="DeBoy R.T."/>
            <person name="Mongodin E.F."/>
            <person name="Fouts D.E."/>
            <person name="Tailford L.E."/>
            <person name="Khouri H."/>
            <person name="Emerson J.B."/>
            <person name="Mohamoud Y."/>
            <person name="Watkins K."/>
            <person name="Henrissat B."/>
            <person name="Gilbert H.J."/>
            <person name="Nelson K.E."/>
        </authorList>
    </citation>
    <scope>NUCLEOTIDE SEQUENCE [LARGE SCALE GENOMIC DNA]</scope>
    <source>
        <strain>Ueda107</strain>
    </source>
</reference>
<evidence type="ECO:0000255" key="1">
    <source>
        <dbReference type="HAMAP-Rule" id="MF_00821"/>
    </source>
</evidence>
<feature type="chain" id="PRO_1000134371" description="Protein-export protein SecB">
    <location>
        <begin position="1"/>
        <end position="167"/>
    </location>
</feature>
<gene>
    <name evidence="1" type="primary">secB</name>
    <name type="ordered locus">CJA_3557</name>
</gene>
<keyword id="KW-0143">Chaperone</keyword>
<keyword id="KW-0963">Cytoplasm</keyword>
<keyword id="KW-0653">Protein transport</keyword>
<keyword id="KW-1185">Reference proteome</keyword>
<keyword id="KW-0811">Translocation</keyword>
<keyword id="KW-0813">Transport</keyword>
<sequence>MSDENNQQDAQQAAGGPQFAIQRIYLKDLSFETPMGVEAFTKAFKPNIQQDLNIQANQVEEGLFEVVLLLTVTARTDNRAVFLVEIKQAGLFAIGGLEGGAVTQLINTACPQILFPYAREAIDSILNRGSFPPLMLPPINFDAVFVQAISQAQQQAETEKAQGETIN</sequence>
<proteinExistence type="inferred from homology"/>
<dbReference type="EMBL" id="CP000934">
    <property type="protein sequence ID" value="ACE84835.1"/>
    <property type="molecule type" value="Genomic_DNA"/>
</dbReference>
<dbReference type="RefSeq" id="WP_012489132.1">
    <property type="nucleotide sequence ID" value="NC_010995.1"/>
</dbReference>
<dbReference type="SMR" id="B3PGW2"/>
<dbReference type="STRING" id="498211.CJA_3557"/>
<dbReference type="KEGG" id="cja:CJA_3557"/>
<dbReference type="eggNOG" id="COG1952">
    <property type="taxonomic scope" value="Bacteria"/>
</dbReference>
<dbReference type="HOGENOM" id="CLU_111574_1_0_6"/>
<dbReference type="OrthoDB" id="9795145at2"/>
<dbReference type="Proteomes" id="UP000001036">
    <property type="component" value="Chromosome"/>
</dbReference>
<dbReference type="GO" id="GO:0005737">
    <property type="term" value="C:cytoplasm"/>
    <property type="evidence" value="ECO:0007669"/>
    <property type="project" value="UniProtKB-SubCell"/>
</dbReference>
<dbReference type="GO" id="GO:0051082">
    <property type="term" value="F:unfolded protein binding"/>
    <property type="evidence" value="ECO:0007669"/>
    <property type="project" value="InterPro"/>
</dbReference>
<dbReference type="GO" id="GO:0006457">
    <property type="term" value="P:protein folding"/>
    <property type="evidence" value="ECO:0007669"/>
    <property type="project" value="UniProtKB-UniRule"/>
</dbReference>
<dbReference type="GO" id="GO:0051262">
    <property type="term" value="P:protein tetramerization"/>
    <property type="evidence" value="ECO:0007669"/>
    <property type="project" value="InterPro"/>
</dbReference>
<dbReference type="GO" id="GO:0015031">
    <property type="term" value="P:protein transport"/>
    <property type="evidence" value="ECO:0007669"/>
    <property type="project" value="UniProtKB-UniRule"/>
</dbReference>
<dbReference type="Gene3D" id="3.10.420.10">
    <property type="entry name" value="SecB-like"/>
    <property type="match status" value="1"/>
</dbReference>
<dbReference type="HAMAP" id="MF_00821">
    <property type="entry name" value="SecB"/>
    <property type="match status" value="1"/>
</dbReference>
<dbReference type="InterPro" id="IPR003708">
    <property type="entry name" value="SecB"/>
</dbReference>
<dbReference type="InterPro" id="IPR035958">
    <property type="entry name" value="SecB-like_sf"/>
</dbReference>
<dbReference type="NCBIfam" id="NF004393">
    <property type="entry name" value="PRK05751.1-4"/>
    <property type="match status" value="1"/>
</dbReference>
<dbReference type="NCBIfam" id="TIGR00809">
    <property type="entry name" value="secB"/>
    <property type="match status" value="1"/>
</dbReference>
<dbReference type="PANTHER" id="PTHR36918">
    <property type="match status" value="1"/>
</dbReference>
<dbReference type="PANTHER" id="PTHR36918:SF1">
    <property type="entry name" value="PROTEIN-EXPORT PROTEIN SECB"/>
    <property type="match status" value="1"/>
</dbReference>
<dbReference type="Pfam" id="PF02556">
    <property type="entry name" value="SecB"/>
    <property type="match status" value="1"/>
</dbReference>
<dbReference type="PRINTS" id="PR01594">
    <property type="entry name" value="SECBCHAPRONE"/>
</dbReference>
<dbReference type="SUPFAM" id="SSF54611">
    <property type="entry name" value="SecB-like"/>
    <property type="match status" value="1"/>
</dbReference>
<protein>
    <recommendedName>
        <fullName evidence="1">Protein-export protein SecB</fullName>
    </recommendedName>
</protein>
<accession>B3PGW2</accession>
<comment type="function">
    <text evidence="1">One of the proteins required for the normal export of preproteins out of the cell cytoplasm. It is a molecular chaperone that binds to a subset of precursor proteins, maintaining them in a translocation-competent state. It also specifically binds to its receptor SecA.</text>
</comment>
<comment type="subunit">
    <text evidence="1">Homotetramer, a dimer of dimers. One homotetramer interacts with 1 SecA dimer.</text>
</comment>
<comment type="subcellular location">
    <subcellularLocation>
        <location evidence="1">Cytoplasm</location>
    </subcellularLocation>
</comment>
<comment type="similarity">
    <text evidence="1">Belongs to the SecB family.</text>
</comment>